<proteinExistence type="inferred from homology"/>
<dbReference type="EC" id="2.7.7.6" evidence="1"/>
<dbReference type="EMBL" id="CP001634">
    <property type="protein sequence ID" value="ACR80529.1"/>
    <property type="molecule type" value="Genomic_DNA"/>
</dbReference>
<dbReference type="RefSeq" id="WP_015869172.1">
    <property type="nucleotide sequence ID" value="NC_012785.1"/>
</dbReference>
<dbReference type="SMR" id="C5CGE8"/>
<dbReference type="STRING" id="521045.Kole_1847"/>
<dbReference type="KEGG" id="kol:Kole_1847"/>
<dbReference type="eggNOG" id="COG1758">
    <property type="taxonomic scope" value="Bacteria"/>
</dbReference>
<dbReference type="HOGENOM" id="CLU_125406_4_0_0"/>
<dbReference type="Proteomes" id="UP000002382">
    <property type="component" value="Chromosome"/>
</dbReference>
<dbReference type="GO" id="GO:0000428">
    <property type="term" value="C:DNA-directed RNA polymerase complex"/>
    <property type="evidence" value="ECO:0007669"/>
    <property type="project" value="UniProtKB-KW"/>
</dbReference>
<dbReference type="GO" id="GO:0003677">
    <property type="term" value="F:DNA binding"/>
    <property type="evidence" value="ECO:0007669"/>
    <property type="project" value="UniProtKB-UniRule"/>
</dbReference>
<dbReference type="GO" id="GO:0003899">
    <property type="term" value="F:DNA-directed RNA polymerase activity"/>
    <property type="evidence" value="ECO:0007669"/>
    <property type="project" value="UniProtKB-UniRule"/>
</dbReference>
<dbReference type="GO" id="GO:0006351">
    <property type="term" value="P:DNA-templated transcription"/>
    <property type="evidence" value="ECO:0007669"/>
    <property type="project" value="UniProtKB-UniRule"/>
</dbReference>
<dbReference type="Gene3D" id="3.90.940.10">
    <property type="match status" value="1"/>
</dbReference>
<dbReference type="HAMAP" id="MF_00366">
    <property type="entry name" value="RNApol_bact_RpoZ"/>
    <property type="match status" value="1"/>
</dbReference>
<dbReference type="InterPro" id="IPR003716">
    <property type="entry name" value="DNA-dir_RNA_pol_omega"/>
</dbReference>
<dbReference type="InterPro" id="IPR006110">
    <property type="entry name" value="Pol_omega/Rpo6/RPB6"/>
</dbReference>
<dbReference type="InterPro" id="IPR036161">
    <property type="entry name" value="RPB6/omega-like_sf"/>
</dbReference>
<dbReference type="NCBIfam" id="TIGR00690">
    <property type="entry name" value="rpoZ"/>
    <property type="match status" value="1"/>
</dbReference>
<dbReference type="Pfam" id="PF01192">
    <property type="entry name" value="RNA_pol_Rpb6"/>
    <property type="match status" value="1"/>
</dbReference>
<dbReference type="SMART" id="SM01409">
    <property type="entry name" value="RNA_pol_Rpb6"/>
    <property type="match status" value="1"/>
</dbReference>
<dbReference type="SUPFAM" id="SSF63562">
    <property type="entry name" value="RPB6/omega subunit-like"/>
    <property type="match status" value="1"/>
</dbReference>
<gene>
    <name evidence="1" type="primary">rpoZ</name>
    <name type="ordered locus">Kole_1847</name>
</gene>
<name>RPOZ_KOSOT</name>
<comment type="function">
    <text evidence="1">Promotes RNA polymerase assembly. Latches the N- and C-terminal regions of the beta' subunit thereby facilitating its interaction with the beta and alpha subunits.</text>
</comment>
<comment type="catalytic activity">
    <reaction evidence="1">
        <text>RNA(n) + a ribonucleoside 5'-triphosphate = RNA(n+1) + diphosphate</text>
        <dbReference type="Rhea" id="RHEA:21248"/>
        <dbReference type="Rhea" id="RHEA-COMP:14527"/>
        <dbReference type="Rhea" id="RHEA-COMP:17342"/>
        <dbReference type="ChEBI" id="CHEBI:33019"/>
        <dbReference type="ChEBI" id="CHEBI:61557"/>
        <dbReference type="ChEBI" id="CHEBI:140395"/>
        <dbReference type="EC" id="2.7.7.6"/>
    </reaction>
</comment>
<comment type="subunit">
    <text evidence="1">The RNAP catalytic core consists of 2 alpha, 1 beta, 1 beta' and 1 omega subunit. When a sigma factor is associated with the core the holoenzyme is formed, which can initiate transcription.</text>
</comment>
<comment type="similarity">
    <text evidence="1">Belongs to the RNA polymerase subunit omega family.</text>
</comment>
<evidence type="ECO:0000255" key="1">
    <source>
        <dbReference type="HAMAP-Rule" id="MF_00366"/>
    </source>
</evidence>
<reference key="1">
    <citation type="submission" date="2009-06" db="EMBL/GenBank/DDBJ databases">
        <title>Complete sequence of Thermotogales bacterium TBF 19.5.1.</title>
        <authorList>
            <consortium name="US DOE Joint Genome Institute"/>
            <person name="Lucas S."/>
            <person name="Copeland A."/>
            <person name="Lapidus A."/>
            <person name="Glavina del Rio T."/>
            <person name="Tice H."/>
            <person name="Bruce D."/>
            <person name="Goodwin L."/>
            <person name="Pitluck S."/>
            <person name="Chertkov O."/>
            <person name="Brettin T."/>
            <person name="Detter J.C."/>
            <person name="Han C."/>
            <person name="Schmutz J."/>
            <person name="Larimer F."/>
            <person name="Land M."/>
            <person name="Hauser L."/>
            <person name="Kyrpides N."/>
            <person name="Ovchinnikova G."/>
            <person name="Noll K."/>
        </authorList>
    </citation>
    <scope>NUCLEOTIDE SEQUENCE [LARGE SCALE GENOMIC DNA]</scope>
    <source>
        <strain>ATCC BAA-1733 / DSM 21960 / TBF 19.5.1</strain>
    </source>
</reference>
<sequence length="79" mass="9093">MSVIINYDKLLKRIRHKYAIPIAAARRAEGLKDFGRPKLDPQMVKQAGDKINIALKELEEGRIVIRNEEMLKILVPKVK</sequence>
<protein>
    <recommendedName>
        <fullName evidence="1">DNA-directed RNA polymerase subunit omega</fullName>
        <shortName evidence="1">RNAP omega subunit</shortName>
        <ecNumber evidence="1">2.7.7.6</ecNumber>
    </recommendedName>
    <alternativeName>
        <fullName evidence="1">RNA polymerase omega subunit</fullName>
    </alternativeName>
    <alternativeName>
        <fullName evidence="1">Transcriptase subunit omega</fullName>
    </alternativeName>
</protein>
<feature type="chain" id="PRO_1000205522" description="DNA-directed RNA polymerase subunit omega">
    <location>
        <begin position="1"/>
        <end position="79"/>
    </location>
</feature>
<organism>
    <name type="scientific">Kosmotoga olearia (strain ATCC BAA-1733 / DSM 21960 / TBF 19.5.1)</name>
    <dbReference type="NCBI Taxonomy" id="521045"/>
    <lineage>
        <taxon>Bacteria</taxon>
        <taxon>Thermotogati</taxon>
        <taxon>Thermotogota</taxon>
        <taxon>Thermotogae</taxon>
        <taxon>Kosmotogales</taxon>
        <taxon>Kosmotogaceae</taxon>
        <taxon>Kosmotoga</taxon>
    </lineage>
</organism>
<keyword id="KW-0240">DNA-directed RNA polymerase</keyword>
<keyword id="KW-0548">Nucleotidyltransferase</keyword>
<keyword id="KW-1185">Reference proteome</keyword>
<keyword id="KW-0804">Transcription</keyword>
<keyword id="KW-0808">Transferase</keyword>
<accession>C5CGE8</accession>